<protein>
    <recommendedName>
        <fullName>12S seed storage globulin 2</fullName>
    </recommendedName>
    <component>
        <recommendedName>
            <fullName>12S seed storage globulin 2 acidic chain</fullName>
        </recommendedName>
    </component>
    <component>
        <recommendedName>
            <fullName>12S seed storage globulin 2 basic chain</fullName>
        </recommendedName>
    </component>
</protein>
<evidence type="ECO:0000250" key="1"/>
<evidence type="ECO:0000255" key="2"/>
<evidence type="ECO:0000256" key="3">
    <source>
        <dbReference type="SAM" id="MobiDB-lite"/>
    </source>
</evidence>
<evidence type="ECO:0000305" key="4"/>
<organism>
    <name type="scientific">Avena sativa</name>
    <name type="common">Oat</name>
    <dbReference type="NCBI Taxonomy" id="4498"/>
    <lineage>
        <taxon>Eukaryota</taxon>
        <taxon>Viridiplantae</taxon>
        <taxon>Streptophyta</taxon>
        <taxon>Embryophyta</taxon>
        <taxon>Tracheophyta</taxon>
        <taxon>Spermatophyta</taxon>
        <taxon>Magnoliopsida</taxon>
        <taxon>Liliopsida</taxon>
        <taxon>Poales</taxon>
        <taxon>Poaceae</taxon>
        <taxon>BOP clade</taxon>
        <taxon>Pooideae</taxon>
        <taxon>Poodae</taxon>
        <taxon>Poeae</taxon>
        <taxon>Poeae Chloroplast Group 1 (Aveneae type)</taxon>
        <taxon>Aveninae</taxon>
        <taxon>Avena</taxon>
    </lineage>
</organism>
<proteinExistence type="inferred from homology"/>
<reference key="1">
    <citation type="journal article" date="1990" name="Nucleic Acids Res.">
        <title>Genomic sequence of a 12S seed storage protein gene from oat (Avena sativa L. cv. 'Solidor').</title>
        <authorList>
            <person name="Schubert R."/>
            <person name="Baeumlein H."/>
            <person name="Czihal A."/>
            <person name="Wobus U."/>
        </authorList>
    </citation>
    <scope>NUCLEOTIDE SEQUENCE [GENOMIC DNA]</scope>
    <source>
        <strain>cv. Solidor</strain>
        <tissue>Leaf</tissue>
    </source>
</reference>
<reference key="2">
    <citation type="journal article" date="1990" name="J. Biol. Chem.">
        <title>Analysis of seed storage protein genes of oats.</title>
        <authorList>
            <person name="Shotwell M.A."/>
            <person name="Boyer S.K."/>
            <person name="Chesnut R.S."/>
            <person name="Larkins B.A."/>
        </authorList>
    </citation>
    <scope>NUCLEOTIDE SEQUENCE [GENOMIC DNA]</scope>
</reference>
<dbReference type="EMBL" id="X17637">
    <property type="protein sequence ID" value="CAA35631.1"/>
    <property type="molecule type" value="Genomic_DNA"/>
</dbReference>
<dbReference type="EMBL" id="J05485">
    <property type="status" value="NOT_ANNOTATED_CDS"/>
    <property type="molecule type" value="Genomic_DNA"/>
</dbReference>
<dbReference type="PIR" id="A36433">
    <property type="entry name" value="A36433"/>
</dbReference>
<dbReference type="PIR" id="S07897">
    <property type="entry name" value="S07897"/>
</dbReference>
<dbReference type="SMR" id="P14812"/>
<dbReference type="Allergome" id="10849">
    <property type="allergen name" value="Ave s 11S"/>
</dbReference>
<dbReference type="GO" id="GO:0045735">
    <property type="term" value="F:nutrient reservoir activity"/>
    <property type="evidence" value="ECO:0007669"/>
    <property type="project" value="UniProtKB-KW"/>
</dbReference>
<dbReference type="GO" id="GO:0048316">
    <property type="term" value="P:seed development"/>
    <property type="evidence" value="ECO:0007669"/>
    <property type="project" value="UniProtKB-ARBA"/>
</dbReference>
<dbReference type="CDD" id="cd02243">
    <property type="entry name" value="cupin_11S_legumin_C"/>
    <property type="match status" value="1"/>
</dbReference>
<dbReference type="CDD" id="cd02242">
    <property type="entry name" value="cupin_11S_legumin_N"/>
    <property type="match status" value="1"/>
</dbReference>
<dbReference type="FunFam" id="2.60.120.10:FF:000073">
    <property type="entry name" value="Glycinin G1"/>
    <property type="match status" value="1"/>
</dbReference>
<dbReference type="Gene3D" id="2.60.120.10">
    <property type="entry name" value="Jelly Rolls"/>
    <property type="match status" value="2"/>
</dbReference>
<dbReference type="InterPro" id="IPR022379">
    <property type="entry name" value="11S_seedstore_CS"/>
</dbReference>
<dbReference type="InterPro" id="IPR006044">
    <property type="entry name" value="11S_seedstore_pln"/>
</dbReference>
<dbReference type="InterPro" id="IPR006045">
    <property type="entry name" value="Cupin_1"/>
</dbReference>
<dbReference type="InterPro" id="IPR014710">
    <property type="entry name" value="RmlC-like_jellyroll"/>
</dbReference>
<dbReference type="InterPro" id="IPR011051">
    <property type="entry name" value="RmlC_Cupin_sf"/>
</dbReference>
<dbReference type="InterPro" id="IPR050253">
    <property type="entry name" value="Seed_Storage-Functional"/>
</dbReference>
<dbReference type="PANTHER" id="PTHR31189:SF35">
    <property type="entry name" value="12S SEED STORAGE PROTEIN CRB"/>
    <property type="match status" value="1"/>
</dbReference>
<dbReference type="PANTHER" id="PTHR31189">
    <property type="entry name" value="OS03G0336100 PROTEIN-RELATED"/>
    <property type="match status" value="1"/>
</dbReference>
<dbReference type="Pfam" id="PF00190">
    <property type="entry name" value="Cupin_1"/>
    <property type="match status" value="2"/>
</dbReference>
<dbReference type="PRINTS" id="PR00439">
    <property type="entry name" value="11SGLOBULIN"/>
</dbReference>
<dbReference type="SMART" id="SM00835">
    <property type="entry name" value="Cupin_1"/>
    <property type="match status" value="2"/>
</dbReference>
<dbReference type="SUPFAM" id="SSF51182">
    <property type="entry name" value="RmlC-like cupins"/>
    <property type="match status" value="1"/>
</dbReference>
<dbReference type="PROSITE" id="PS00305">
    <property type="entry name" value="11S_SEED_STORAGE"/>
    <property type="match status" value="1"/>
</dbReference>
<accession>P14812</accession>
<name>SSG2_AVESA</name>
<comment type="function">
    <text>This is a seed storage protein.</text>
</comment>
<comment type="subunit">
    <text>Hexamer; each subunit is composed of an acidic and a basic chain derived from a single precursor and linked by a disulfide bond.</text>
</comment>
<comment type="similarity">
    <text evidence="4">Belongs to the 11S seed storage protein (globulins) family.</text>
</comment>
<sequence>MATTRFPSLLFYSYIFLLCNGSMAQLFGQSFTPWQSSRQGGLRGCRFDRLQAFEPLRQVRSQAGIIEYFDEQNEQFRCAGVSVIRRVIEPQGLLLPQYHNAPGLVYILQGRGFTGLTFPGCPATFQQQFQPFDQAQFAEGQSQSQNLKDEHQRVHHIKQGDVVALPAGIVHWCYNDGDAPIVAVYVFDVNNNANQLEPRQKEFLLAGNNKREQQFGQNIFSGFSVQLLSEALGISQQVAQKIQSQNDQRGEIIRVSQGLQFLKPFVSQQGPVEHQAYQPIQSQEEQSTQYQVGQSPQYQEGQSTQYQPGQSWDQSFNGLEENFCSLEARQNIENPKRADTYNPRAGRITHLNSKNFPTLNLVQMSATRVNLYQNAILSPYWNINAHSVMHMIQGRARVQVVNNHGQTVFNDILRRGQLLIIPQHYVVLKKAEREGCQYISFKTNPNSMVSQIAGKTSILRALPVDVLANAYRISRQEAQNLKNNRGEEFDAFTPKFTQTGSQSYQDEGESSSTEKASE</sequence>
<feature type="signal peptide">
    <location>
        <begin position="1"/>
        <end position="24"/>
    </location>
</feature>
<feature type="chain" id="PRO_0000032086" description="12S seed storage globulin 2 acidic chain">
    <location>
        <begin position="25"/>
        <end position="317"/>
    </location>
</feature>
<feature type="chain" id="PRO_0000032087" description="12S seed storage globulin 2 basic chain">
    <location>
        <begin position="318"/>
        <end position="518"/>
    </location>
</feature>
<feature type="domain" description="Cupin type-1 1" evidence="2">
    <location>
        <begin position="50"/>
        <end position="240"/>
    </location>
</feature>
<feature type="domain" description="Cupin type-1 2" evidence="2">
    <location>
        <begin position="330"/>
        <end position="479"/>
    </location>
</feature>
<feature type="region of interest" description="Disordered" evidence="3">
    <location>
        <begin position="280"/>
        <end position="311"/>
    </location>
</feature>
<feature type="region of interest" description="Disordered" evidence="3">
    <location>
        <begin position="482"/>
        <end position="518"/>
    </location>
</feature>
<feature type="compositionally biased region" description="Polar residues" evidence="3">
    <location>
        <begin position="495"/>
        <end position="518"/>
    </location>
</feature>
<feature type="disulfide bond" evidence="1">
    <location>
        <begin position="45"/>
        <end position="78"/>
    </location>
</feature>
<feature type="disulfide bond" description="Interchain (between acidic and basic chains)" evidence="2">
    <location>
        <begin position="121"/>
        <end position="324"/>
    </location>
</feature>
<feature type="sequence conflict" description="In Ref. 2." evidence="4" ref="2">
    <original>R</original>
    <variation>G</variation>
    <location>
        <position position="60"/>
    </location>
</feature>
<keyword id="KW-1015">Disulfide bond</keyword>
<keyword id="KW-0708">Seed storage protein</keyword>
<keyword id="KW-0732">Signal</keyword>
<keyword id="KW-0758">Storage protein</keyword>